<keyword id="KW-1015">Disulfide bond</keyword>
<keyword id="KW-0378">Hydrolase</keyword>
<keyword id="KW-0645">Protease</keyword>
<keyword id="KW-1185">Reference proteome</keyword>
<keyword id="KW-0677">Repeat</keyword>
<keyword id="KW-0720">Serine protease</keyword>
<keyword id="KW-0732">Signal</keyword>
<comment type="similarity">
    <text evidence="4">Belongs to the peptidase S1C family.</text>
</comment>
<gene>
    <name type="primary">degP</name>
    <name type="ordered locus">BU228</name>
</gene>
<name>DEGP_BUCAI</name>
<dbReference type="EC" id="3.4.21.-"/>
<dbReference type="EMBL" id="BA000003">
    <property type="protein sequence ID" value="BAB12943.1"/>
    <property type="molecule type" value="Genomic_DNA"/>
</dbReference>
<dbReference type="RefSeq" id="NP_240057.1">
    <property type="nucleotide sequence ID" value="NC_002528.1"/>
</dbReference>
<dbReference type="RefSeq" id="WP_010896016.1">
    <property type="nucleotide sequence ID" value="NC_002528.1"/>
</dbReference>
<dbReference type="SMR" id="P57322"/>
<dbReference type="STRING" id="563178.BUAP5A_223"/>
<dbReference type="EnsemblBacteria" id="BAB12943">
    <property type="protein sequence ID" value="BAB12943"/>
    <property type="gene ID" value="BAB12943"/>
</dbReference>
<dbReference type="KEGG" id="buc:BU228"/>
<dbReference type="PATRIC" id="fig|107806.10.peg.241"/>
<dbReference type="eggNOG" id="COG0265">
    <property type="taxonomic scope" value="Bacteria"/>
</dbReference>
<dbReference type="HOGENOM" id="CLU_020120_1_1_6"/>
<dbReference type="Proteomes" id="UP000001806">
    <property type="component" value="Chromosome"/>
</dbReference>
<dbReference type="GO" id="GO:0004252">
    <property type="term" value="F:serine-type endopeptidase activity"/>
    <property type="evidence" value="ECO:0007669"/>
    <property type="project" value="InterPro"/>
</dbReference>
<dbReference type="GO" id="GO:0006508">
    <property type="term" value="P:proteolysis"/>
    <property type="evidence" value="ECO:0007669"/>
    <property type="project" value="UniProtKB-KW"/>
</dbReference>
<dbReference type="CDD" id="cd10839">
    <property type="entry name" value="cpPDZ1_DegP-like"/>
    <property type="match status" value="1"/>
</dbReference>
<dbReference type="FunFam" id="2.30.42.10:FF:000037">
    <property type="entry name" value="Periplasmic serine endoprotease DegP-like"/>
    <property type="match status" value="1"/>
</dbReference>
<dbReference type="FunFam" id="2.40.10.120:FF:000001">
    <property type="entry name" value="Periplasmic serine endoprotease DegP-like"/>
    <property type="match status" value="1"/>
</dbReference>
<dbReference type="FunFam" id="2.40.10.10:FF:000001">
    <property type="entry name" value="Periplasmic serine protease DegS"/>
    <property type="match status" value="1"/>
</dbReference>
<dbReference type="Gene3D" id="2.30.42.10">
    <property type="match status" value="2"/>
</dbReference>
<dbReference type="Gene3D" id="2.40.10.120">
    <property type="match status" value="1"/>
</dbReference>
<dbReference type="InterPro" id="IPR001478">
    <property type="entry name" value="PDZ"/>
</dbReference>
<dbReference type="InterPro" id="IPR036034">
    <property type="entry name" value="PDZ_sf"/>
</dbReference>
<dbReference type="InterPro" id="IPR011782">
    <property type="entry name" value="Pept_S1C_Do"/>
</dbReference>
<dbReference type="InterPro" id="IPR009003">
    <property type="entry name" value="Peptidase_S1_PA"/>
</dbReference>
<dbReference type="InterPro" id="IPR001940">
    <property type="entry name" value="Peptidase_S1C"/>
</dbReference>
<dbReference type="NCBIfam" id="TIGR02037">
    <property type="entry name" value="degP_htrA_DO"/>
    <property type="match status" value="1"/>
</dbReference>
<dbReference type="NCBIfam" id="NF008189">
    <property type="entry name" value="PRK10942.1"/>
    <property type="match status" value="1"/>
</dbReference>
<dbReference type="PANTHER" id="PTHR22939">
    <property type="entry name" value="SERINE PROTEASE FAMILY S1C HTRA-RELATED"/>
    <property type="match status" value="1"/>
</dbReference>
<dbReference type="PANTHER" id="PTHR22939:SF129">
    <property type="entry name" value="SERINE PROTEASE HTRA2, MITOCHONDRIAL"/>
    <property type="match status" value="1"/>
</dbReference>
<dbReference type="Pfam" id="PF00595">
    <property type="entry name" value="PDZ"/>
    <property type="match status" value="1"/>
</dbReference>
<dbReference type="Pfam" id="PF13180">
    <property type="entry name" value="PDZ_2"/>
    <property type="match status" value="1"/>
</dbReference>
<dbReference type="Pfam" id="PF13365">
    <property type="entry name" value="Trypsin_2"/>
    <property type="match status" value="1"/>
</dbReference>
<dbReference type="PRINTS" id="PR00834">
    <property type="entry name" value="PROTEASES2C"/>
</dbReference>
<dbReference type="SMART" id="SM00228">
    <property type="entry name" value="PDZ"/>
    <property type="match status" value="2"/>
</dbReference>
<dbReference type="SUPFAM" id="SSF50156">
    <property type="entry name" value="PDZ domain-like"/>
    <property type="match status" value="2"/>
</dbReference>
<dbReference type="SUPFAM" id="SSF50494">
    <property type="entry name" value="Trypsin-like serine proteases"/>
    <property type="match status" value="1"/>
</dbReference>
<dbReference type="PROSITE" id="PS50106">
    <property type="entry name" value="PDZ"/>
    <property type="match status" value="1"/>
</dbReference>
<feature type="signal peptide" evidence="2">
    <location>
        <begin position="1"/>
        <end position="26"/>
    </location>
</feature>
<feature type="chain" id="PRO_0000026927" description="Probable serine protease do-like">
    <location>
        <begin position="27"/>
        <end position="478"/>
    </location>
</feature>
<feature type="domain" description="PDZ 1" evidence="3">
    <location>
        <begin position="281"/>
        <end position="372"/>
    </location>
</feature>
<feature type="domain" description="PDZ 2" evidence="3">
    <location>
        <begin position="387"/>
        <end position="469"/>
    </location>
</feature>
<feature type="region of interest" description="Serine protease">
    <location>
        <begin position="116"/>
        <end position="254"/>
    </location>
</feature>
<feature type="active site" description="Charge relay system" evidence="2">
    <location>
        <position position="133"/>
    </location>
</feature>
<feature type="active site" description="Charge relay system" evidence="2">
    <location>
        <position position="163"/>
    </location>
</feature>
<feature type="active site" description="Charge relay system" evidence="2">
    <location>
        <position position="238"/>
    </location>
</feature>
<feature type="disulfide bond" evidence="1">
    <location>
        <begin position="87"/>
        <end position="99"/>
    </location>
</feature>
<protein>
    <recommendedName>
        <fullName>Probable serine protease do-like</fullName>
        <ecNumber>3.4.21.-</ecNumber>
    </recommendedName>
</protein>
<sequence length="478" mass="52230">MKKSAIILSKIILILTLLLSFGMSWNNVFSNTKNSIVSREISPSLAPMLEKVMPSVISINIEGSAITRTSRLPHQFQPFFGDNSPFCQGNSPFRHSPFCHINPDSDDKKEKFRALGSGVIINADKGYAVTNNHVVENANKIQVQLSDGRRYEARVIGKDSRSDIALIQLKNANNLSEIKIADSDNLRVGDYTVAIGNPYGLGETVTSGIISALGRSGLNIEHYENFIQTDAAINRGNSGGALVNLKGELIGINTAILAPDGGNIGIGFAIPCNMVKNLTAQMVQFGQVRRGELGIMGMELNSDLAQIMKINSQKGAFVSRVLPNSSAFEAGIKAGDIIISLNRKPISSFSSLRAEIGSLPVATKMELGVFREGRIKNITVELKHSVKHNLNSENDYIGIEGVDLSDYIFNEQKVIKVDNVKPHTPASKIGFKKDDIILNVNQKLISNVDELKKFLHSKPKILVFNIKRGNDTIYLVSE</sequence>
<reference key="1">
    <citation type="journal article" date="2000" name="Nature">
        <title>Genome sequence of the endocellular bacterial symbiont of aphids Buchnera sp. APS.</title>
        <authorList>
            <person name="Shigenobu S."/>
            <person name="Watanabe H."/>
            <person name="Hattori M."/>
            <person name="Sakaki Y."/>
            <person name="Ishikawa H."/>
        </authorList>
    </citation>
    <scope>NUCLEOTIDE SEQUENCE [LARGE SCALE GENOMIC DNA]</scope>
    <source>
        <strain>APS</strain>
    </source>
</reference>
<proteinExistence type="inferred from homology"/>
<evidence type="ECO:0000250" key="1"/>
<evidence type="ECO:0000255" key="2"/>
<evidence type="ECO:0000255" key="3">
    <source>
        <dbReference type="PROSITE-ProRule" id="PRU00143"/>
    </source>
</evidence>
<evidence type="ECO:0000305" key="4"/>
<organism>
    <name type="scientific">Buchnera aphidicola subsp. Acyrthosiphon pisum (strain APS)</name>
    <name type="common">Acyrthosiphon pisum symbiotic bacterium</name>
    <dbReference type="NCBI Taxonomy" id="107806"/>
    <lineage>
        <taxon>Bacteria</taxon>
        <taxon>Pseudomonadati</taxon>
        <taxon>Pseudomonadota</taxon>
        <taxon>Gammaproteobacteria</taxon>
        <taxon>Enterobacterales</taxon>
        <taxon>Erwiniaceae</taxon>
        <taxon>Buchnera</taxon>
    </lineage>
</organism>
<accession>P57322</accession>